<protein>
    <recommendedName>
        <fullName evidence="1">Multidrug resistance protein MdtB</fullName>
    </recommendedName>
    <alternativeName>
        <fullName evidence="1">Multidrug transporter MdtB</fullName>
    </alternativeName>
</protein>
<reference key="1">
    <citation type="journal article" date="2005" name="Nucleic Acids Res.">
        <title>Genome dynamics and diversity of Shigella species, the etiologic agents of bacillary dysentery.</title>
        <authorList>
            <person name="Yang F."/>
            <person name="Yang J."/>
            <person name="Zhang X."/>
            <person name="Chen L."/>
            <person name="Jiang Y."/>
            <person name="Yan Y."/>
            <person name="Tang X."/>
            <person name="Wang J."/>
            <person name="Xiong Z."/>
            <person name="Dong J."/>
            <person name="Xue Y."/>
            <person name="Zhu Y."/>
            <person name="Xu X."/>
            <person name="Sun L."/>
            <person name="Chen S."/>
            <person name="Nie H."/>
            <person name="Peng J."/>
            <person name="Xu J."/>
            <person name="Wang Y."/>
            <person name="Yuan Z."/>
            <person name="Wen Y."/>
            <person name="Yao Z."/>
            <person name="Shen Y."/>
            <person name="Qiang B."/>
            <person name="Hou Y."/>
            <person name="Yu J."/>
            <person name="Jin Q."/>
        </authorList>
    </citation>
    <scope>NUCLEOTIDE SEQUENCE [LARGE SCALE GENOMIC DNA]</scope>
    <source>
        <strain>Sb227</strain>
    </source>
</reference>
<proteinExistence type="inferred from homology"/>
<name>MDTB_SHIBS</name>
<sequence>MQVLPPSSTGGPSRLFIMRPVATTLLMVAILLAGIIGYRALPVSALPEVDYPTIQVVTLYPGASPDVMTSAVTAPLERQFGQMSGLKQMSSQSSGGASVITLQFQLTLPLDVAEQEVQAAINAATNLLPSDLPNPPVYSKVNPADPPIMTLAVTSTAMPMTQVEDMVETRVAQKISQISGVGLVTLSGGQRPAVRVKLNAQAIAALGLTSETVRTAITGANVNSAKGSLDGPSRAVTLSANDQMQSAEEYRQLIIAYQNGAPIRLGDVATVEQGAENSWLGAWANKEQAIVMNVQRQPGANIISTADSIRQMLPQLTESLPKSVKVTVLSDRTTNIRASVDDTQFELMMAIALVVMIIYLFLRNIPATIIPGVAVPLSLIGTFAVMVFLDFSINNLTLMALTIATGFVVDDAIVVIENISRYIEKGEKPLAAALKGAGEIGFTIISLIFSLIAVLIPLLFMGDIVGRLFREFAITLAVAILISAVVSLTLTPMMCARMLSQESLRKQNRFSRASEKMFDRIIAAYGRGLAKVLNHPWLTLSVALSTLLLSVLLWVFIPKGFFPVQDNGIIQGTLQAPQSSSFANMAQRQRQVADVILQDPAVQSLTSFVGVDGTNPSLNSARLQINLKPLDERDDRVQKVIARLQTAVDKVPGVDLFLQPTQDLTIDTQVSRTQYQFTLQATSLDALSTWVPQLMEKLQQLPQLSDVSSDWQDKGLVAYVNVDRDSASRLGISMADVDNALYSAFGQRLISTIYTQANQYRVVLEHNTEITPGLAALDTIRLTSSDGGVVPLSSIAKVEQRFAPLSINHLDQFPVTTISFNVPDNYSLGDAVQAIMDTEKTLNLPVDITTQFQGSTLAFQSALGSTVWLIVAAVVAMYIVLGILYESFIHPITILSTLPTAGVGALLALMIAGSELDVIAIIGIILLIGIVKKNAIMMIDFALAAEREQGMSPRDAIYQACLLRFRPILMTTLAALLGALPLMLSTGVGAELRRPLGIGMVGGLIVSQVLTLFTTPVIYLLFDRLALWTKSRFARHEEEA</sequence>
<evidence type="ECO:0000255" key="1">
    <source>
        <dbReference type="HAMAP-Rule" id="MF_01423"/>
    </source>
</evidence>
<comment type="subunit">
    <text evidence="1">Part of a tripartite efflux system composed of MdtA, MdtB and MdtC. MdtB forms a heteromultimer with MdtC.</text>
</comment>
<comment type="subcellular location">
    <subcellularLocation>
        <location evidence="1">Cell inner membrane</location>
        <topology evidence="1">Multi-pass membrane protein</topology>
    </subcellularLocation>
</comment>
<comment type="similarity">
    <text evidence="1">Belongs to the resistance-nodulation-cell division (RND) (TC 2.A.6) family. MdtB subfamily.</text>
</comment>
<dbReference type="EMBL" id="CP000036">
    <property type="protein sequence ID" value="ABB65568.1"/>
    <property type="molecule type" value="Genomic_DNA"/>
</dbReference>
<dbReference type="RefSeq" id="WP_001197852.1">
    <property type="nucleotide sequence ID" value="NC_007613.1"/>
</dbReference>
<dbReference type="SMR" id="Q323E0"/>
<dbReference type="KEGG" id="sbo:SBO_0901"/>
<dbReference type="HOGENOM" id="CLU_002755_1_2_6"/>
<dbReference type="Proteomes" id="UP000007067">
    <property type="component" value="Chromosome"/>
</dbReference>
<dbReference type="GO" id="GO:0005886">
    <property type="term" value="C:plasma membrane"/>
    <property type="evidence" value="ECO:0007669"/>
    <property type="project" value="UniProtKB-SubCell"/>
</dbReference>
<dbReference type="GO" id="GO:0042910">
    <property type="term" value="F:xenobiotic transmembrane transporter activity"/>
    <property type="evidence" value="ECO:0007669"/>
    <property type="project" value="TreeGrafter"/>
</dbReference>
<dbReference type="FunFam" id="1.20.1640.10:FF:000001">
    <property type="entry name" value="Efflux pump membrane transporter"/>
    <property type="match status" value="1"/>
</dbReference>
<dbReference type="FunFam" id="3.30.70.1430:FF:000001">
    <property type="entry name" value="Efflux pump membrane transporter"/>
    <property type="match status" value="1"/>
</dbReference>
<dbReference type="FunFam" id="3.30.2090.10:FF:000003">
    <property type="entry name" value="Multidrug resistance protein MdtB"/>
    <property type="match status" value="1"/>
</dbReference>
<dbReference type="Gene3D" id="3.30.70.1430">
    <property type="entry name" value="Multidrug efflux transporter AcrB pore domain"/>
    <property type="match status" value="2"/>
</dbReference>
<dbReference type="Gene3D" id="3.30.70.1440">
    <property type="entry name" value="Multidrug efflux transporter AcrB pore domain"/>
    <property type="match status" value="1"/>
</dbReference>
<dbReference type="Gene3D" id="3.30.70.1320">
    <property type="entry name" value="Multidrug efflux transporter AcrB pore domain like"/>
    <property type="match status" value="1"/>
</dbReference>
<dbReference type="Gene3D" id="3.30.2090.10">
    <property type="entry name" value="Multidrug efflux transporter AcrB TolC docking domain, DN and DC subdomains"/>
    <property type="match status" value="2"/>
</dbReference>
<dbReference type="Gene3D" id="1.20.1640.10">
    <property type="entry name" value="Multidrug efflux transporter AcrB transmembrane domain"/>
    <property type="match status" value="2"/>
</dbReference>
<dbReference type="HAMAP" id="MF_01423">
    <property type="entry name" value="MdtB"/>
    <property type="match status" value="1"/>
</dbReference>
<dbReference type="InterPro" id="IPR027463">
    <property type="entry name" value="AcrB_DN_DC_subdom"/>
</dbReference>
<dbReference type="InterPro" id="IPR001036">
    <property type="entry name" value="Acrflvin-R"/>
</dbReference>
<dbReference type="InterPro" id="IPR022831">
    <property type="entry name" value="Multidrug-R_MdtB"/>
</dbReference>
<dbReference type="NCBIfam" id="NF007798">
    <property type="entry name" value="PRK10503.1"/>
    <property type="match status" value="1"/>
</dbReference>
<dbReference type="NCBIfam" id="NF033617">
    <property type="entry name" value="RND_permease_2"/>
    <property type="match status" value="1"/>
</dbReference>
<dbReference type="PANTHER" id="PTHR32063">
    <property type="match status" value="1"/>
</dbReference>
<dbReference type="PANTHER" id="PTHR32063:SF21">
    <property type="entry name" value="MULTIDRUG RESISTANCE PROTEIN MDTB"/>
    <property type="match status" value="1"/>
</dbReference>
<dbReference type="Pfam" id="PF00873">
    <property type="entry name" value="ACR_tran"/>
    <property type="match status" value="1"/>
</dbReference>
<dbReference type="PRINTS" id="PR00702">
    <property type="entry name" value="ACRIFLAVINRP"/>
</dbReference>
<dbReference type="SUPFAM" id="SSF82693">
    <property type="entry name" value="Multidrug efflux transporter AcrB pore domain, PN1, PN2, PC1 and PC2 subdomains"/>
    <property type="match status" value="3"/>
</dbReference>
<dbReference type="SUPFAM" id="SSF82714">
    <property type="entry name" value="Multidrug efflux transporter AcrB TolC docking domain, DN and DC subdomains"/>
    <property type="match status" value="2"/>
</dbReference>
<dbReference type="SUPFAM" id="SSF82866">
    <property type="entry name" value="Multidrug efflux transporter AcrB transmembrane domain"/>
    <property type="match status" value="2"/>
</dbReference>
<accession>Q323E0</accession>
<organism>
    <name type="scientific">Shigella boydii serotype 4 (strain Sb227)</name>
    <dbReference type="NCBI Taxonomy" id="300268"/>
    <lineage>
        <taxon>Bacteria</taxon>
        <taxon>Pseudomonadati</taxon>
        <taxon>Pseudomonadota</taxon>
        <taxon>Gammaproteobacteria</taxon>
        <taxon>Enterobacterales</taxon>
        <taxon>Enterobacteriaceae</taxon>
        <taxon>Shigella</taxon>
    </lineage>
</organism>
<feature type="chain" id="PRO_1000024307" description="Multidrug resistance protein MdtB">
    <location>
        <begin position="1"/>
        <end position="1040"/>
    </location>
</feature>
<feature type="transmembrane region" description="Helical" evidence="1">
    <location>
        <begin position="16"/>
        <end position="36"/>
    </location>
</feature>
<feature type="transmembrane region" description="Helical" evidence="1">
    <location>
        <begin position="347"/>
        <end position="367"/>
    </location>
</feature>
<feature type="transmembrane region" description="Helical" evidence="1">
    <location>
        <begin position="369"/>
        <end position="389"/>
    </location>
</feature>
<feature type="transmembrane region" description="Helical" evidence="1">
    <location>
        <begin position="396"/>
        <end position="416"/>
    </location>
</feature>
<feature type="transmembrane region" description="Helical" evidence="1">
    <location>
        <begin position="440"/>
        <end position="460"/>
    </location>
</feature>
<feature type="transmembrane region" description="Helical" evidence="1">
    <location>
        <begin position="472"/>
        <end position="492"/>
    </location>
</feature>
<feature type="transmembrane region" description="Helical" evidence="1">
    <location>
        <begin position="537"/>
        <end position="557"/>
    </location>
</feature>
<feature type="transmembrane region" description="Helical" evidence="1">
    <location>
        <begin position="863"/>
        <end position="883"/>
    </location>
</feature>
<feature type="transmembrane region" description="Helical" evidence="1">
    <location>
        <begin position="888"/>
        <end position="908"/>
    </location>
</feature>
<feature type="transmembrane region" description="Helical" evidence="1">
    <location>
        <begin position="911"/>
        <end position="931"/>
    </location>
</feature>
<feature type="transmembrane region" description="Helical" evidence="1">
    <location>
        <begin position="968"/>
        <end position="988"/>
    </location>
</feature>
<feature type="transmembrane region" description="Helical" evidence="1">
    <location>
        <begin position="998"/>
        <end position="1018"/>
    </location>
</feature>
<keyword id="KW-0997">Cell inner membrane</keyword>
<keyword id="KW-1003">Cell membrane</keyword>
<keyword id="KW-0472">Membrane</keyword>
<keyword id="KW-0812">Transmembrane</keyword>
<keyword id="KW-1133">Transmembrane helix</keyword>
<keyword id="KW-0813">Transport</keyword>
<gene>
    <name evidence="1" type="primary">mdtB</name>
    <name type="ordered locus">SBO_0901</name>
</gene>